<evidence type="ECO:0000255" key="1">
    <source>
        <dbReference type="HAMAP-Rule" id="MF_00144"/>
    </source>
</evidence>
<feature type="chain" id="PRO_0000121687" description="tRNA-specific 2-thiouridylase MnmA">
    <location>
        <begin position="1"/>
        <end position="373"/>
    </location>
</feature>
<feature type="region of interest" description="Interaction with target base in tRNA" evidence="1">
    <location>
        <begin position="98"/>
        <end position="100"/>
    </location>
</feature>
<feature type="region of interest" description="Interaction with tRNA" evidence="1">
    <location>
        <begin position="150"/>
        <end position="152"/>
    </location>
</feature>
<feature type="region of interest" description="Interaction with tRNA" evidence="1">
    <location>
        <begin position="312"/>
        <end position="313"/>
    </location>
</feature>
<feature type="active site" description="Nucleophile" evidence="1">
    <location>
        <position position="103"/>
    </location>
</feature>
<feature type="active site" description="Cysteine persulfide intermediate" evidence="1">
    <location>
        <position position="200"/>
    </location>
</feature>
<feature type="binding site" evidence="1">
    <location>
        <begin position="12"/>
        <end position="19"/>
    </location>
    <ligand>
        <name>ATP</name>
        <dbReference type="ChEBI" id="CHEBI:30616"/>
    </ligand>
</feature>
<feature type="binding site" evidence="1">
    <location>
        <position position="38"/>
    </location>
    <ligand>
        <name>ATP</name>
        <dbReference type="ChEBI" id="CHEBI:30616"/>
    </ligand>
</feature>
<feature type="binding site" evidence="1">
    <location>
        <position position="127"/>
    </location>
    <ligand>
        <name>ATP</name>
        <dbReference type="ChEBI" id="CHEBI:30616"/>
    </ligand>
</feature>
<feature type="site" description="Interaction with tRNA" evidence="1">
    <location>
        <position position="128"/>
    </location>
</feature>
<feature type="site" description="Interaction with tRNA" evidence="1">
    <location>
        <position position="344"/>
    </location>
</feature>
<feature type="disulfide bond" description="Alternate" evidence="1">
    <location>
        <begin position="103"/>
        <end position="200"/>
    </location>
</feature>
<sequence length="373" mass="41770">MTDNSKIRVVVGMSGGVDSSVTALLLKEQGYDVIGVFMKNWDDTDEFGVCTATEDYKDVAAVADKIGIPYYSVNFEKEYWDRVFEYFLAEYRAGRTPNPDVMCNKEIKFKAFLDYAMTLGADYVATGHYAQVKRDENGTVHMLRGADNGKDQTYFLSQLSQEQLQKTLFPLGHLQKSEVREIAERAGLATAKKKDSTGICFIGEKNFKQFLSQYLPAQKGRMMTIDGRDMGEHAGLMYYTIGQRGGLGIGGQHGGDNQPWFVVGKDLSQNILYVGQGFYHEALMSNSLDASVIHFTREMPEEFTFECTAKFRYRQPDSHVAVHVRGDKAEVVFAEPQRAITPGQAVVFYDGKECLGGGMIDMAYKNGQPCQYI</sequence>
<accession>P58075</accession>
<accession>Q48W17</accession>
<dbReference type="EC" id="2.8.1.13" evidence="1"/>
<dbReference type="EMBL" id="AE004092">
    <property type="protein sequence ID" value="AAK34817.1"/>
    <property type="molecule type" value="Genomic_DNA"/>
</dbReference>
<dbReference type="EMBL" id="CP000017">
    <property type="protein sequence ID" value="AAZ52458.1"/>
    <property type="molecule type" value="Genomic_DNA"/>
</dbReference>
<dbReference type="RefSeq" id="NP_270096.1">
    <property type="nucleotide sequence ID" value="NC_002737.2"/>
</dbReference>
<dbReference type="SMR" id="P58075"/>
<dbReference type="PaxDb" id="1314-HKU360_01950"/>
<dbReference type="KEGG" id="spy:SPy_2188"/>
<dbReference type="KEGG" id="spz:M5005_Spy1840"/>
<dbReference type="PATRIC" id="fig|160490.10.peg.1894"/>
<dbReference type="HOGENOM" id="CLU_035188_1_0_9"/>
<dbReference type="OMA" id="PFYVWDL"/>
<dbReference type="Proteomes" id="UP000000750">
    <property type="component" value="Chromosome"/>
</dbReference>
<dbReference type="GO" id="GO:0005737">
    <property type="term" value="C:cytoplasm"/>
    <property type="evidence" value="ECO:0007669"/>
    <property type="project" value="UniProtKB-SubCell"/>
</dbReference>
<dbReference type="GO" id="GO:0005524">
    <property type="term" value="F:ATP binding"/>
    <property type="evidence" value="ECO:0007669"/>
    <property type="project" value="UniProtKB-KW"/>
</dbReference>
<dbReference type="GO" id="GO:0000049">
    <property type="term" value="F:tRNA binding"/>
    <property type="evidence" value="ECO:0007669"/>
    <property type="project" value="UniProtKB-KW"/>
</dbReference>
<dbReference type="GO" id="GO:0103016">
    <property type="term" value="F:tRNA-uridine 2-sulfurtransferase activity"/>
    <property type="evidence" value="ECO:0007669"/>
    <property type="project" value="UniProtKB-EC"/>
</dbReference>
<dbReference type="GO" id="GO:0002143">
    <property type="term" value="P:tRNA wobble position uridine thiolation"/>
    <property type="evidence" value="ECO:0007669"/>
    <property type="project" value="TreeGrafter"/>
</dbReference>
<dbReference type="CDD" id="cd01998">
    <property type="entry name" value="MnmA_TRMU-like"/>
    <property type="match status" value="1"/>
</dbReference>
<dbReference type="FunFam" id="2.30.30.280:FF:000001">
    <property type="entry name" value="tRNA-specific 2-thiouridylase MnmA"/>
    <property type="match status" value="1"/>
</dbReference>
<dbReference type="FunFam" id="2.40.30.10:FF:000023">
    <property type="entry name" value="tRNA-specific 2-thiouridylase MnmA"/>
    <property type="match status" value="1"/>
</dbReference>
<dbReference type="FunFam" id="3.40.50.620:FF:000004">
    <property type="entry name" value="tRNA-specific 2-thiouridylase MnmA"/>
    <property type="match status" value="1"/>
</dbReference>
<dbReference type="Gene3D" id="2.30.30.280">
    <property type="entry name" value="Adenine nucleotide alpha hydrolases-like domains"/>
    <property type="match status" value="1"/>
</dbReference>
<dbReference type="Gene3D" id="3.40.50.620">
    <property type="entry name" value="HUPs"/>
    <property type="match status" value="1"/>
</dbReference>
<dbReference type="Gene3D" id="2.40.30.10">
    <property type="entry name" value="Translation factors"/>
    <property type="match status" value="1"/>
</dbReference>
<dbReference type="HAMAP" id="MF_00144">
    <property type="entry name" value="tRNA_thiouridyl_MnmA"/>
    <property type="match status" value="1"/>
</dbReference>
<dbReference type="InterPro" id="IPR004506">
    <property type="entry name" value="MnmA-like"/>
</dbReference>
<dbReference type="InterPro" id="IPR046885">
    <property type="entry name" value="MnmA-like_C"/>
</dbReference>
<dbReference type="InterPro" id="IPR046884">
    <property type="entry name" value="MnmA-like_central"/>
</dbReference>
<dbReference type="InterPro" id="IPR023382">
    <property type="entry name" value="MnmA-like_central_sf"/>
</dbReference>
<dbReference type="InterPro" id="IPR014729">
    <property type="entry name" value="Rossmann-like_a/b/a_fold"/>
</dbReference>
<dbReference type="NCBIfam" id="NF001138">
    <property type="entry name" value="PRK00143.1"/>
    <property type="match status" value="1"/>
</dbReference>
<dbReference type="NCBIfam" id="TIGR00420">
    <property type="entry name" value="trmU"/>
    <property type="match status" value="1"/>
</dbReference>
<dbReference type="PANTHER" id="PTHR11933:SF5">
    <property type="entry name" value="MITOCHONDRIAL TRNA-SPECIFIC 2-THIOURIDYLASE 1"/>
    <property type="match status" value="1"/>
</dbReference>
<dbReference type="PANTHER" id="PTHR11933">
    <property type="entry name" value="TRNA 5-METHYLAMINOMETHYL-2-THIOURIDYLATE -METHYLTRANSFERASE"/>
    <property type="match status" value="1"/>
</dbReference>
<dbReference type="Pfam" id="PF03054">
    <property type="entry name" value="tRNA_Me_trans"/>
    <property type="match status" value="1"/>
</dbReference>
<dbReference type="Pfam" id="PF20258">
    <property type="entry name" value="tRNA_Me_trans_C"/>
    <property type="match status" value="1"/>
</dbReference>
<dbReference type="Pfam" id="PF20259">
    <property type="entry name" value="tRNA_Me_trans_M"/>
    <property type="match status" value="1"/>
</dbReference>
<dbReference type="SUPFAM" id="SSF52402">
    <property type="entry name" value="Adenine nucleotide alpha hydrolases-like"/>
    <property type="match status" value="1"/>
</dbReference>
<keyword id="KW-0067">ATP-binding</keyword>
<keyword id="KW-0963">Cytoplasm</keyword>
<keyword id="KW-1015">Disulfide bond</keyword>
<keyword id="KW-0547">Nucleotide-binding</keyword>
<keyword id="KW-1185">Reference proteome</keyword>
<keyword id="KW-0694">RNA-binding</keyword>
<keyword id="KW-0808">Transferase</keyword>
<keyword id="KW-0819">tRNA processing</keyword>
<keyword id="KW-0820">tRNA-binding</keyword>
<protein>
    <recommendedName>
        <fullName evidence="1">tRNA-specific 2-thiouridylase MnmA</fullName>
        <ecNumber evidence="1">2.8.1.13</ecNumber>
    </recommendedName>
</protein>
<name>MNMA_STRP1</name>
<reference key="1">
    <citation type="journal article" date="2001" name="Proc. Natl. Acad. Sci. U.S.A.">
        <title>Complete genome sequence of an M1 strain of Streptococcus pyogenes.</title>
        <authorList>
            <person name="Ferretti J.J."/>
            <person name="McShan W.M."/>
            <person name="Ajdic D.J."/>
            <person name="Savic D.J."/>
            <person name="Savic G."/>
            <person name="Lyon K."/>
            <person name="Primeaux C."/>
            <person name="Sezate S."/>
            <person name="Suvorov A.N."/>
            <person name="Kenton S."/>
            <person name="Lai H.S."/>
            <person name="Lin S.P."/>
            <person name="Qian Y."/>
            <person name="Jia H.G."/>
            <person name="Najar F.Z."/>
            <person name="Ren Q."/>
            <person name="Zhu H."/>
            <person name="Song L."/>
            <person name="White J."/>
            <person name="Yuan X."/>
            <person name="Clifton S.W."/>
            <person name="Roe B.A."/>
            <person name="McLaughlin R.E."/>
        </authorList>
    </citation>
    <scope>NUCLEOTIDE SEQUENCE [LARGE SCALE GENOMIC DNA]</scope>
    <source>
        <strain>ATCC 700294 / SF370 / Serotype M1</strain>
    </source>
</reference>
<reference key="2">
    <citation type="journal article" date="2005" name="J. Infect. Dis.">
        <title>Evolutionary origin and emergence of a highly successful clone of serotype M1 group A Streptococcus involved multiple horizontal gene transfer events.</title>
        <authorList>
            <person name="Sumby P."/>
            <person name="Porcella S.F."/>
            <person name="Madrigal A.G."/>
            <person name="Barbian K.D."/>
            <person name="Virtaneva K."/>
            <person name="Ricklefs S.M."/>
            <person name="Sturdevant D.E."/>
            <person name="Graham M.R."/>
            <person name="Vuopio-Varkila J."/>
            <person name="Hoe N.P."/>
            <person name="Musser J.M."/>
        </authorList>
    </citation>
    <scope>NUCLEOTIDE SEQUENCE [LARGE SCALE GENOMIC DNA]</scope>
    <source>
        <strain>ATCC BAA-947 / MGAS5005 / Serotype M1</strain>
    </source>
</reference>
<proteinExistence type="inferred from homology"/>
<organism>
    <name type="scientific">Streptococcus pyogenes serotype M1</name>
    <dbReference type="NCBI Taxonomy" id="301447"/>
    <lineage>
        <taxon>Bacteria</taxon>
        <taxon>Bacillati</taxon>
        <taxon>Bacillota</taxon>
        <taxon>Bacilli</taxon>
        <taxon>Lactobacillales</taxon>
        <taxon>Streptococcaceae</taxon>
        <taxon>Streptococcus</taxon>
    </lineage>
</organism>
<gene>
    <name evidence="1" type="primary">mnmA</name>
    <name type="synonym">trmU</name>
    <name type="ordered locus">SPy_2188</name>
    <name type="ordered locus">M5005_Spy1840</name>
</gene>
<comment type="function">
    <text evidence="1">Catalyzes the 2-thiolation of uridine at the wobble position (U34) of tRNA, leading to the formation of s(2)U34.</text>
</comment>
<comment type="catalytic activity">
    <reaction evidence="1">
        <text>S-sulfanyl-L-cysteinyl-[protein] + uridine(34) in tRNA + AH2 + ATP = 2-thiouridine(34) in tRNA + L-cysteinyl-[protein] + A + AMP + diphosphate + H(+)</text>
        <dbReference type="Rhea" id="RHEA:47032"/>
        <dbReference type="Rhea" id="RHEA-COMP:10131"/>
        <dbReference type="Rhea" id="RHEA-COMP:11726"/>
        <dbReference type="Rhea" id="RHEA-COMP:11727"/>
        <dbReference type="Rhea" id="RHEA-COMP:11728"/>
        <dbReference type="ChEBI" id="CHEBI:13193"/>
        <dbReference type="ChEBI" id="CHEBI:15378"/>
        <dbReference type="ChEBI" id="CHEBI:17499"/>
        <dbReference type="ChEBI" id="CHEBI:29950"/>
        <dbReference type="ChEBI" id="CHEBI:30616"/>
        <dbReference type="ChEBI" id="CHEBI:33019"/>
        <dbReference type="ChEBI" id="CHEBI:61963"/>
        <dbReference type="ChEBI" id="CHEBI:65315"/>
        <dbReference type="ChEBI" id="CHEBI:87170"/>
        <dbReference type="ChEBI" id="CHEBI:456215"/>
        <dbReference type="EC" id="2.8.1.13"/>
    </reaction>
</comment>
<comment type="subcellular location">
    <subcellularLocation>
        <location evidence="1">Cytoplasm</location>
    </subcellularLocation>
</comment>
<comment type="similarity">
    <text evidence="1">Belongs to the MnmA/TRMU family.</text>
</comment>